<feature type="chain" id="PRO_0000267930" description="Large ribosomal subunit protein bL17">
    <location>
        <begin position="1"/>
        <end position="136"/>
    </location>
</feature>
<comment type="subunit">
    <text evidence="1">Part of the 50S ribosomal subunit. Contacts protein L32.</text>
</comment>
<comment type="similarity">
    <text evidence="1">Belongs to the bacterial ribosomal protein bL17 family.</text>
</comment>
<name>RL17_RHOPS</name>
<gene>
    <name evidence="1" type="primary">rplQ</name>
    <name type="ordered locus">RPD_3159</name>
</gene>
<keyword id="KW-0687">Ribonucleoprotein</keyword>
<keyword id="KW-0689">Ribosomal protein</keyword>
<protein>
    <recommendedName>
        <fullName evidence="1">Large ribosomal subunit protein bL17</fullName>
    </recommendedName>
    <alternativeName>
        <fullName evidence="2">50S ribosomal protein L17</fullName>
    </alternativeName>
</protein>
<organism>
    <name type="scientific">Rhodopseudomonas palustris (strain BisB5)</name>
    <dbReference type="NCBI Taxonomy" id="316057"/>
    <lineage>
        <taxon>Bacteria</taxon>
        <taxon>Pseudomonadati</taxon>
        <taxon>Pseudomonadota</taxon>
        <taxon>Alphaproteobacteria</taxon>
        <taxon>Hyphomicrobiales</taxon>
        <taxon>Nitrobacteraceae</taxon>
        <taxon>Rhodopseudomonas</taxon>
    </lineage>
</organism>
<proteinExistence type="inferred from homology"/>
<dbReference type="EMBL" id="CP000283">
    <property type="protein sequence ID" value="ABE40385.1"/>
    <property type="molecule type" value="Genomic_DNA"/>
</dbReference>
<dbReference type="SMR" id="Q134V4"/>
<dbReference type="STRING" id="316057.RPD_3159"/>
<dbReference type="KEGG" id="rpd:RPD_3159"/>
<dbReference type="eggNOG" id="COG0203">
    <property type="taxonomic scope" value="Bacteria"/>
</dbReference>
<dbReference type="HOGENOM" id="CLU_074407_2_0_5"/>
<dbReference type="BioCyc" id="RPAL316057:RPD_RS15860-MONOMER"/>
<dbReference type="Proteomes" id="UP000001818">
    <property type="component" value="Chromosome"/>
</dbReference>
<dbReference type="GO" id="GO:0022625">
    <property type="term" value="C:cytosolic large ribosomal subunit"/>
    <property type="evidence" value="ECO:0007669"/>
    <property type="project" value="TreeGrafter"/>
</dbReference>
<dbReference type="GO" id="GO:0003735">
    <property type="term" value="F:structural constituent of ribosome"/>
    <property type="evidence" value="ECO:0007669"/>
    <property type="project" value="InterPro"/>
</dbReference>
<dbReference type="GO" id="GO:0006412">
    <property type="term" value="P:translation"/>
    <property type="evidence" value="ECO:0007669"/>
    <property type="project" value="UniProtKB-UniRule"/>
</dbReference>
<dbReference type="FunFam" id="3.90.1030.10:FF:000001">
    <property type="entry name" value="50S ribosomal protein L17"/>
    <property type="match status" value="1"/>
</dbReference>
<dbReference type="Gene3D" id="3.90.1030.10">
    <property type="entry name" value="Ribosomal protein L17"/>
    <property type="match status" value="1"/>
</dbReference>
<dbReference type="HAMAP" id="MF_01368">
    <property type="entry name" value="Ribosomal_bL17"/>
    <property type="match status" value="1"/>
</dbReference>
<dbReference type="InterPro" id="IPR000456">
    <property type="entry name" value="Ribosomal_bL17"/>
</dbReference>
<dbReference type="InterPro" id="IPR047859">
    <property type="entry name" value="Ribosomal_bL17_CS"/>
</dbReference>
<dbReference type="InterPro" id="IPR036373">
    <property type="entry name" value="Ribosomal_bL17_sf"/>
</dbReference>
<dbReference type="NCBIfam" id="TIGR00059">
    <property type="entry name" value="L17"/>
    <property type="match status" value="1"/>
</dbReference>
<dbReference type="PANTHER" id="PTHR14413:SF16">
    <property type="entry name" value="LARGE RIBOSOMAL SUBUNIT PROTEIN BL17M"/>
    <property type="match status" value="1"/>
</dbReference>
<dbReference type="PANTHER" id="PTHR14413">
    <property type="entry name" value="RIBOSOMAL PROTEIN L17"/>
    <property type="match status" value="1"/>
</dbReference>
<dbReference type="Pfam" id="PF01196">
    <property type="entry name" value="Ribosomal_L17"/>
    <property type="match status" value="1"/>
</dbReference>
<dbReference type="SUPFAM" id="SSF64263">
    <property type="entry name" value="Prokaryotic ribosomal protein L17"/>
    <property type="match status" value="1"/>
</dbReference>
<dbReference type="PROSITE" id="PS01167">
    <property type="entry name" value="RIBOSOMAL_L17"/>
    <property type="match status" value="1"/>
</dbReference>
<accession>Q134V4</accession>
<sequence>MRHGKVHRKLNRTAEHRKAMFANMCAALIKHEQIVTTLPKAKELRPIVEKLVTLGKKGGLDKRRQAISEMRDLDQVRKLFGVLAPRYKDRNGGYTRIIKAGFRYGDNAPMAVIEFVDRDEDAKGKDSGPTQESEAA</sequence>
<evidence type="ECO:0000255" key="1">
    <source>
        <dbReference type="HAMAP-Rule" id="MF_01368"/>
    </source>
</evidence>
<evidence type="ECO:0000305" key="2"/>
<reference key="1">
    <citation type="submission" date="2006-03" db="EMBL/GenBank/DDBJ databases">
        <title>Complete sequence of Rhodopseudomonas palustris BisB5.</title>
        <authorList>
            <consortium name="US DOE Joint Genome Institute"/>
            <person name="Copeland A."/>
            <person name="Lucas S."/>
            <person name="Lapidus A."/>
            <person name="Barry K."/>
            <person name="Detter J.C."/>
            <person name="Glavina del Rio T."/>
            <person name="Hammon N."/>
            <person name="Israni S."/>
            <person name="Dalin E."/>
            <person name="Tice H."/>
            <person name="Pitluck S."/>
            <person name="Chain P."/>
            <person name="Malfatti S."/>
            <person name="Shin M."/>
            <person name="Vergez L."/>
            <person name="Schmutz J."/>
            <person name="Larimer F."/>
            <person name="Land M."/>
            <person name="Hauser L."/>
            <person name="Pelletier D.A."/>
            <person name="Kyrpides N."/>
            <person name="Lykidis A."/>
            <person name="Oda Y."/>
            <person name="Harwood C.S."/>
            <person name="Richardson P."/>
        </authorList>
    </citation>
    <scope>NUCLEOTIDE SEQUENCE [LARGE SCALE GENOMIC DNA]</scope>
    <source>
        <strain>BisB5</strain>
    </source>
</reference>